<organism>
    <name type="scientific">Danio rerio</name>
    <name type="common">Zebrafish</name>
    <name type="synonym">Brachydanio rerio</name>
    <dbReference type="NCBI Taxonomy" id="7955"/>
    <lineage>
        <taxon>Eukaryota</taxon>
        <taxon>Metazoa</taxon>
        <taxon>Chordata</taxon>
        <taxon>Craniata</taxon>
        <taxon>Vertebrata</taxon>
        <taxon>Euteleostomi</taxon>
        <taxon>Actinopterygii</taxon>
        <taxon>Neopterygii</taxon>
        <taxon>Teleostei</taxon>
        <taxon>Ostariophysi</taxon>
        <taxon>Cypriniformes</taxon>
        <taxon>Danionidae</taxon>
        <taxon>Danioninae</taxon>
        <taxon>Danio</taxon>
    </lineage>
</organism>
<sequence>MSRLSLTRSPVSPLAAQGIPLPAQLTKSNAPVHIDVGGHMYTSSLATLTKYPDSRISRLFNGTEPIVLDSLKQHYFIDRDGEIFRYILSYLRTSKLLLPEDFKEFQLLYEEARYYQLTPMVKELERWKQEREQRRSAQPCECLVVRVTPDLGERIAVSGDKSLIEEIFPETGDVMCNSVNAGWNQDPTHVIRFPLNGYCRLNSVQVLERLFQKGFSMVASCGGGVDSSQFSEYILSREDRRCQTSHTPIRIKQEPLD</sequence>
<evidence type="ECO:0000269" key="1">
    <source>
    </source>
</evidence>
<gene>
    <name type="primary">kctd15l</name>
    <name type="ORF">zgc:103747</name>
</gene>
<dbReference type="EMBL" id="BC083478">
    <property type="protein sequence ID" value="AAH83478.1"/>
    <property type="molecule type" value="mRNA"/>
</dbReference>
<dbReference type="RefSeq" id="NP_001006012.1">
    <property type="nucleotide sequence ID" value="NM_001006012.1"/>
</dbReference>
<dbReference type="SMR" id="Q5XJ34"/>
<dbReference type="FunCoup" id="Q5XJ34">
    <property type="interactions" value="3"/>
</dbReference>
<dbReference type="STRING" id="7955.ENSDARP00000122355"/>
<dbReference type="iPTMnet" id="Q5XJ34"/>
<dbReference type="PaxDb" id="7955-ENSDARP00000122355"/>
<dbReference type="Ensembl" id="ENSDART00000142665">
    <property type="protein sequence ID" value="ENSDARP00000122355"/>
    <property type="gene ID" value="ENSDARG00000045893"/>
</dbReference>
<dbReference type="Ensembl" id="ENSDART00000181707">
    <property type="protein sequence ID" value="ENSDARP00000151653"/>
    <property type="gene ID" value="ENSDARG00000045893"/>
</dbReference>
<dbReference type="GeneID" id="449991"/>
<dbReference type="KEGG" id="dre:449991"/>
<dbReference type="AGR" id="ZFIN:ZDB-GENE-041010-105"/>
<dbReference type="CTD" id="449991"/>
<dbReference type="ZFIN" id="ZDB-GENE-041010-105">
    <property type="gene designation" value="kctd15a"/>
</dbReference>
<dbReference type="eggNOG" id="KOG2723">
    <property type="taxonomic scope" value="Eukaryota"/>
</dbReference>
<dbReference type="InParanoid" id="Q5XJ34"/>
<dbReference type="OMA" id="CECLVLR"/>
<dbReference type="OrthoDB" id="2414723at2759"/>
<dbReference type="PhylomeDB" id="Q5XJ34"/>
<dbReference type="TreeFam" id="TF315332"/>
<dbReference type="PRO" id="PR:Q5XJ34"/>
<dbReference type="Proteomes" id="UP000000437">
    <property type="component" value="Chromosome 25"/>
</dbReference>
<dbReference type="Bgee" id="ENSDARG00000045893">
    <property type="expression patterns" value="Expressed in presomitic mesoderm and 37 other cell types or tissues"/>
</dbReference>
<dbReference type="ExpressionAtlas" id="Q5XJ34">
    <property type="expression patterns" value="baseline and differential"/>
</dbReference>
<dbReference type="GO" id="GO:0003714">
    <property type="term" value="F:transcription corepressor activity"/>
    <property type="evidence" value="ECO:0000318"/>
    <property type="project" value="GO_Central"/>
</dbReference>
<dbReference type="GO" id="GO:0007420">
    <property type="term" value="P:brain development"/>
    <property type="evidence" value="ECO:0000316"/>
    <property type="project" value="ZFIN"/>
</dbReference>
<dbReference type="GO" id="GO:0060070">
    <property type="term" value="P:canonical Wnt signaling pathway"/>
    <property type="evidence" value="ECO:0000316"/>
    <property type="project" value="ZFIN"/>
</dbReference>
<dbReference type="GO" id="GO:0045892">
    <property type="term" value="P:negative regulation of DNA-templated transcription"/>
    <property type="evidence" value="ECO:0000318"/>
    <property type="project" value="GO_Central"/>
</dbReference>
<dbReference type="GO" id="GO:0014033">
    <property type="term" value="P:neural crest cell differentiation"/>
    <property type="evidence" value="ECO:0000316"/>
    <property type="project" value="ZFIN"/>
</dbReference>
<dbReference type="GO" id="GO:0060037">
    <property type="term" value="P:pharyngeal system development"/>
    <property type="evidence" value="ECO:0000316"/>
    <property type="project" value="ZFIN"/>
</dbReference>
<dbReference type="GO" id="GO:0051260">
    <property type="term" value="P:protein homooligomerization"/>
    <property type="evidence" value="ECO:0007669"/>
    <property type="project" value="InterPro"/>
</dbReference>
<dbReference type="GO" id="GO:2001141">
    <property type="term" value="P:regulation of RNA biosynthetic process"/>
    <property type="evidence" value="ECO:0000314"/>
    <property type="project" value="ZFIN"/>
</dbReference>
<dbReference type="CDD" id="cd18388">
    <property type="entry name" value="BTB_POZ_KCTD15"/>
    <property type="match status" value="1"/>
</dbReference>
<dbReference type="FunFam" id="3.30.710.10:FF:000003">
    <property type="entry name" value="BTB/POZ domain-containing protein KCTD6 isoform X2"/>
    <property type="match status" value="1"/>
</dbReference>
<dbReference type="Gene3D" id="3.30.710.10">
    <property type="entry name" value="Potassium Channel Kv1.1, Chain A"/>
    <property type="match status" value="1"/>
</dbReference>
<dbReference type="InterPro" id="IPR000210">
    <property type="entry name" value="BTB/POZ_dom"/>
</dbReference>
<dbReference type="InterPro" id="IPR048595">
    <property type="entry name" value="KCTD1-15-like_C"/>
</dbReference>
<dbReference type="InterPro" id="IPR045904">
    <property type="entry name" value="KCTD15_T1-type_BTB"/>
</dbReference>
<dbReference type="InterPro" id="IPR011333">
    <property type="entry name" value="SKP1/BTB/POZ_sf"/>
</dbReference>
<dbReference type="InterPro" id="IPR003131">
    <property type="entry name" value="T1-type_BTB"/>
</dbReference>
<dbReference type="PANTHER" id="PTHR14499:SF27">
    <property type="entry name" value="BTB_POZ DOMAIN-CONTAINING PROTEIN KCTD15"/>
    <property type="match status" value="1"/>
</dbReference>
<dbReference type="PANTHER" id="PTHR14499">
    <property type="entry name" value="POTASSIUM CHANNEL TETRAMERIZATION DOMAIN-CONTAINING"/>
    <property type="match status" value="1"/>
</dbReference>
<dbReference type="Pfam" id="PF02214">
    <property type="entry name" value="BTB_2"/>
    <property type="match status" value="1"/>
</dbReference>
<dbReference type="Pfam" id="PF20871">
    <property type="entry name" value="KCTD1-15_CTD"/>
    <property type="match status" value="1"/>
</dbReference>
<dbReference type="SMART" id="SM00225">
    <property type="entry name" value="BTB"/>
    <property type="match status" value="1"/>
</dbReference>
<dbReference type="SUPFAM" id="SSF54695">
    <property type="entry name" value="POZ domain"/>
    <property type="match status" value="1"/>
</dbReference>
<protein>
    <recommendedName>
        <fullName>BTB/POZ domain-containing protein kctd15-like</fullName>
    </recommendedName>
</protein>
<accession>Q5XJ34</accession>
<name>KC15L_DANRE</name>
<feature type="chain" id="PRO_0000247253" description="BTB/POZ domain-containing protein kctd15-like">
    <location>
        <begin position="1"/>
        <end position="257"/>
    </location>
</feature>
<feature type="domain" description="BTB">
    <location>
        <begin position="30"/>
        <end position="100"/>
    </location>
</feature>
<feature type="modified residue" description="Phosphoserine" evidence="1">
    <location>
        <position position="9"/>
    </location>
</feature>
<feature type="modified residue" description="Phosphoserine" evidence="1">
    <location>
        <position position="12"/>
    </location>
</feature>
<proteinExistence type="evidence at protein level"/>
<reference key="1">
    <citation type="submission" date="2004-10" db="EMBL/GenBank/DDBJ databases">
        <authorList>
            <consortium name="NIH - Zebrafish Gene Collection (ZGC) project"/>
        </authorList>
    </citation>
    <scope>NUCLEOTIDE SEQUENCE [LARGE SCALE MRNA]</scope>
    <source>
        <tissue>Larval eye</tissue>
    </source>
</reference>
<reference key="2">
    <citation type="journal article" date="2008" name="J. Proteome Res.">
        <title>Online automated in vivo zebrafish phosphoproteomics: from large-scale analysis down to a single embryo.</title>
        <authorList>
            <person name="Lemeer S."/>
            <person name="Pinkse M.W.H."/>
            <person name="Mohammed S."/>
            <person name="van Breukelen B."/>
            <person name="den Hertog J."/>
            <person name="Slijper M."/>
            <person name="Heck A.J.R."/>
        </authorList>
    </citation>
    <scope>PHOSPHORYLATION [LARGE SCALE ANALYSIS] AT SER-9 AND SER-12</scope>
    <scope>IDENTIFICATION BY MASS SPECTROMETRY</scope>
    <source>
        <tissue>Embryo</tissue>
    </source>
</reference>
<keyword id="KW-0597">Phosphoprotein</keyword>
<keyword id="KW-1185">Reference proteome</keyword>